<sequence>MPLFGSTFSPKKTPPRKSASLSNLHNLDRSTREVELGLDYGTPTMNLAGQSLKFENGQWIAETGISGGVDRREAQRLRRRNQQLEEENNLLRLKVDILLDMLSETTAESHLMEKELDELKSVSRRRK</sequence>
<proteinExistence type="evidence at transcript level"/>
<gene>
    <name type="primary">CBY1</name>
    <name type="synonym">CBY</name>
    <name type="synonym">PGEA1</name>
</gene>
<dbReference type="EMBL" id="AF393210">
    <property type="protein sequence ID" value="AAM73678.1"/>
    <property type="molecule type" value="mRNA"/>
</dbReference>
<dbReference type="EMBL" id="BC120055">
    <property type="protein sequence ID" value="AAI20056.1"/>
    <property type="molecule type" value="mRNA"/>
</dbReference>
<dbReference type="RefSeq" id="NP_777164.1">
    <property type="nucleotide sequence ID" value="NM_174739.4"/>
</dbReference>
<dbReference type="RefSeq" id="XP_005207367.1">
    <property type="nucleotide sequence ID" value="XM_005207310.5"/>
</dbReference>
<dbReference type="RefSeq" id="XP_005207368.1">
    <property type="nucleotide sequence ID" value="XM_005207311.3"/>
</dbReference>
<dbReference type="RefSeq" id="XP_010804004.1">
    <property type="nucleotide sequence ID" value="XM_010805702.2"/>
</dbReference>
<dbReference type="RefSeq" id="XP_010804005.1">
    <property type="nucleotide sequence ID" value="XM_010805703.2"/>
</dbReference>
<dbReference type="RefSeq" id="XP_010804006.1">
    <property type="nucleotide sequence ID" value="XM_010805704.4"/>
</dbReference>
<dbReference type="RefSeq" id="XP_015326859.1">
    <property type="nucleotide sequence ID" value="XM_015471373.2"/>
</dbReference>
<dbReference type="RefSeq" id="XP_024847153.1">
    <property type="nucleotide sequence ID" value="XM_024991385.2"/>
</dbReference>
<dbReference type="RefSeq" id="XP_024847156.1">
    <property type="nucleotide sequence ID" value="XM_024991388.2"/>
</dbReference>
<dbReference type="RefSeq" id="XP_059742113.1">
    <property type="nucleotide sequence ID" value="XM_059886130.1"/>
</dbReference>
<dbReference type="RefSeq" id="XP_059742114.1">
    <property type="nucleotide sequence ID" value="XM_059886131.1"/>
</dbReference>
<dbReference type="SMR" id="Q8MJK1"/>
<dbReference type="FunCoup" id="Q8MJK1">
    <property type="interactions" value="2444"/>
</dbReference>
<dbReference type="STRING" id="9913.ENSBTAP00000071373"/>
<dbReference type="PaxDb" id="9913-ENSBTAP00000008651"/>
<dbReference type="Ensembl" id="ENSBTAT00000008651.5">
    <property type="protein sequence ID" value="ENSBTAP00000008651.3"/>
    <property type="gene ID" value="ENSBTAG00000006588.5"/>
</dbReference>
<dbReference type="GeneID" id="282859"/>
<dbReference type="KEGG" id="bta:282859"/>
<dbReference type="CTD" id="25776"/>
<dbReference type="VEuPathDB" id="HostDB:ENSBTAG00000006588"/>
<dbReference type="VGNC" id="VGNC:26822">
    <property type="gene designation" value="CBY1"/>
</dbReference>
<dbReference type="eggNOG" id="ENOG502S6C8">
    <property type="taxonomic scope" value="Eukaryota"/>
</dbReference>
<dbReference type="GeneTree" id="ENSGT00940000153137"/>
<dbReference type="HOGENOM" id="CLU_134504_0_0_1"/>
<dbReference type="InParanoid" id="Q8MJK1"/>
<dbReference type="OMA" id="IWMHSAR"/>
<dbReference type="OrthoDB" id="2145765at2759"/>
<dbReference type="TreeFam" id="TF324419"/>
<dbReference type="Reactome" id="R-BTA-3769402">
    <property type="pathway name" value="Deactivation of the beta-catenin transactivating complex"/>
</dbReference>
<dbReference type="Proteomes" id="UP000009136">
    <property type="component" value="Chromosome 5"/>
</dbReference>
<dbReference type="Bgee" id="ENSBTAG00000006588">
    <property type="expression patterns" value="Expressed in retina and 108 other cell types or tissues"/>
</dbReference>
<dbReference type="GO" id="GO:0005814">
    <property type="term" value="C:centriole"/>
    <property type="evidence" value="ECO:0007669"/>
    <property type="project" value="UniProtKB-SubCell"/>
</dbReference>
<dbReference type="GO" id="GO:0005794">
    <property type="term" value="C:Golgi apparatus"/>
    <property type="evidence" value="ECO:0007669"/>
    <property type="project" value="UniProtKB-SubCell"/>
</dbReference>
<dbReference type="GO" id="GO:0016607">
    <property type="term" value="C:nuclear speck"/>
    <property type="evidence" value="ECO:0007669"/>
    <property type="project" value="UniProtKB-SubCell"/>
</dbReference>
<dbReference type="GO" id="GO:0005634">
    <property type="term" value="C:nucleus"/>
    <property type="evidence" value="ECO:0000318"/>
    <property type="project" value="GO_Central"/>
</dbReference>
<dbReference type="GO" id="GO:0036126">
    <property type="term" value="C:sperm flagellum"/>
    <property type="evidence" value="ECO:0000250"/>
    <property type="project" value="UniProtKB"/>
</dbReference>
<dbReference type="GO" id="GO:0055007">
    <property type="term" value="P:cardiac muscle cell differentiation"/>
    <property type="evidence" value="ECO:0000250"/>
    <property type="project" value="UniProtKB"/>
</dbReference>
<dbReference type="GO" id="GO:0030030">
    <property type="term" value="P:cell projection organization"/>
    <property type="evidence" value="ECO:0007669"/>
    <property type="project" value="UniProtKB-KW"/>
</dbReference>
<dbReference type="GO" id="GO:0045444">
    <property type="term" value="P:fat cell differentiation"/>
    <property type="evidence" value="ECO:0000250"/>
    <property type="project" value="UniProtKB"/>
</dbReference>
<dbReference type="GO" id="GO:0030178">
    <property type="term" value="P:negative regulation of Wnt signaling pathway"/>
    <property type="evidence" value="ECO:0000318"/>
    <property type="project" value="GO_Central"/>
</dbReference>
<dbReference type="CDD" id="cd07429">
    <property type="entry name" value="Cby_like"/>
    <property type="match status" value="1"/>
</dbReference>
<dbReference type="InterPro" id="IPR028118">
    <property type="entry name" value="Chibby_fam"/>
</dbReference>
<dbReference type="PANTHER" id="PTHR21533">
    <property type="entry name" value="LEUCINE-RICH PROTEIN"/>
    <property type="match status" value="1"/>
</dbReference>
<dbReference type="PANTHER" id="PTHR21533:SF20">
    <property type="entry name" value="PROTEIN CHIBBY HOMOLOG 1"/>
    <property type="match status" value="1"/>
</dbReference>
<dbReference type="Pfam" id="PF14645">
    <property type="entry name" value="Chibby"/>
    <property type="match status" value="1"/>
</dbReference>
<name>CBY1_BOVIN</name>
<feature type="chain" id="PRO_0000089387" description="Protein chibby homolog 1">
    <location>
        <begin position="1"/>
        <end position="127"/>
    </location>
</feature>
<feature type="region of interest" description="Disordered" evidence="5">
    <location>
        <begin position="1"/>
        <end position="26"/>
    </location>
</feature>
<feature type="region of interest" description="Minimal region for the interaction with PKD2" evidence="3">
    <location>
        <begin position="60"/>
        <end position="112"/>
    </location>
</feature>
<feature type="region of interest" description="Leucine-zipper; mediates homodimerization" evidence="3">
    <location>
        <begin position="77"/>
        <end position="98"/>
    </location>
</feature>
<feature type="coiled-coil region" evidence="4">
    <location>
        <begin position="68"/>
        <end position="125"/>
    </location>
</feature>
<feature type="compositionally biased region" description="Polar residues" evidence="5">
    <location>
        <begin position="1"/>
        <end position="10"/>
    </location>
</feature>
<feature type="modified residue" description="Phosphoserine" evidence="1">
    <location>
        <position position="9"/>
    </location>
</feature>
<feature type="modified residue" description="Phosphoserine" evidence="3">
    <location>
        <position position="20"/>
    </location>
</feature>
<keyword id="KW-0966">Cell projection</keyword>
<keyword id="KW-0969">Cilium</keyword>
<keyword id="KW-0970">Cilium biogenesis/degradation</keyword>
<keyword id="KW-0175">Coiled coil</keyword>
<keyword id="KW-0963">Cytoplasm</keyword>
<keyword id="KW-0206">Cytoskeleton</keyword>
<keyword id="KW-0221">Differentiation</keyword>
<keyword id="KW-0282">Flagellum</keyword>
<keyword id="KW-0333">Golgi apparatus</keyword>
<keyword id="KW-0539">Nucleus</keyword>
<keyword id="KW-0597">Phosphoprotein</keyword>
<keyword id="KW-1185">Reference proteome</keyword>
<comment type="function">
    <text evidence="2 3">Inhibits the Wnt/Wingless pathway by binding to CTNNB1/beta-catenin and inhibiting beta-catenin-mediated transcriptional activation through competition with TCF/LEF transcription factors. Has also been shown to play a role in regulating the intracellular trafficking of polycystin-2/PKD2 and possibly of other intracellular proteins. Promotes adipocyte and cardiomyocyte differentiation.</text>
</comment>
<comment type="subunit">
    <text evidence="3">Homodimer. Homodimerization is essential for nuclear localization and interaction with KPNA4 but is dispensable for interaction with CTNNB1. Interacts with polycystin-2/PKD2 and GM130. Interacts with the C-terminal region of CTNNB1. Interacts (C-terminus) with TCIM (C-terminus), TCIM competes with CTNNB1 for the interaction with CBY1. Interacts with FAM92A; this interaction facilitates targeting of FAM92A to cilium basal body. Interacts with CIBAR2. Interacts with KPNA4.</text>
</comment>
<comment type="subcellular location">
    <subcellularLocation>
        <location evidence="3">Nucleus speckle</location>
    </subcellularLocation>
    <subcellularLocation>
        <location evidence="3">Cytoplasm</location>
        <location evidence="3">Cytoskeleton</location>
        <location evidence="3">Cilium basal body</location>
    </subcellularLocation>
    <subcellularLocation>
        <location evidence="3">Cytoplasm</location>
        <location evidence="3">Cytoskeleton</location>
        <location evidence="3">Microtubule organizing center</location>
        <location evidence="3">Centrosome</location>
        <location evidence="3">Centriole</location>
    </subcellularLocation>
    <subcellularLocation>
        <location evidence="3">Golgi apparatus</location>
    </subcellularLocation>
    <subcellularLocation>
        <location evidence="3">Golgi apparatus</location>
        <location evidence="3">trans-Golgi network</location>
    </subcellularLocation>
    <subcellularLocation>
        <location evidence="2">Cell projection</location>
        <location evidence="2">Cilium</location>
        <location evidence="2">Flagellum</location>
    </subcellularLocation>
    <subcellularLocation>
        <location evidence="3">Nucleus</location>
    </subcellularLocation>
    <subcellularLocation>
        <location evidence="3">Cytoplasm</location>
    </subcellularLocation>
    <text evidence="3">Nuclear, in a punctate manner (By similarity).</text>
</comment>
<comment type="miscellaneous">
    <text>'Chibby' is Japanese for 'small'; the gene was so named for the RNAi phenotype seen in flies.</text>
</comment>
<comment type="similarity">
    <text evidence="6">Belongs to the chibby family.</text>
</comment>
<protein>
    <recommendedName>
        <fullName>Protein chibby homolog 1</fullName>
    </recommendedName>
    <alternativeName>
        <fullName>Cytosolic leucine-rich protein</fullName>
    </alternativeName>
    <alternativeName>
        <fullName>PIGEA-14</fullName>
    </alternativeName>
    <alternativeName>
        <fullName>PKD2 interactor, Golgi and endoplasmic reticulum-associated 1</fullName>
    </alternativeName>
</protein>
<organism>
    <name type="scientific">Bos taurus</name>
    <name type="common">Bovine</name>
    <dbReference type="NCBI Taxonomy" id="9913"/>
    <lineage>
        <taxon>Eukaryota</taxon>
        <taxon>Metazoa</taxon>
        <taxon>Chordata</taxon>
        <taxon>Craniata</taxon>
        <taxon>Vertebrata</taxon>
        <taxon>Euteleostomi</taxon>
        <taxon>Mammalia</taxon>
        <taxon>Eutheria</taxon>
        <taxon>Laurasiatheria</taxon>
        <taxon>Artiodactyla</taxon>
        <taxon>Ruminantia</taxon>
        <taxon>Pecora</taxon>
        <taxon>Bovidae</taxon>
        <taxon>Bovinae</taxon>
        <taxon>Bos</taxon>
    </lineage>
</organism>
<evidence type="ECO:0000250" key="1">
    <source>
        <dbReference type="UniProtKB" id="Q8K4I6"/>
    </source>
</evidence>
<evidence type="ECO:0000250" key="2">
    <source>
        <dbReference type="UniProtKB" id="Q9D1C2"/>
    </source>
</evidence>
<evidence type="ECO:0000250" key="3">
    <source>
        <dbReference type="UniProtKB" id="Q9Y3M2"/>
    </source>
</evidence>
<evidence type="ECO:0000255" key="4"/>
<evidence type="ECO:0000256" key="5">
    <source>
        <dbReference type="SAM" id="MobiDB-lite"/>
    </source>
</evidence>
<evidence type="ECO:0000305" key="6"/>
<accession>Q8MJK1</accession>
<accession>Q0P5H0</accession>
<reference key="1">
    <citation type="submission" date="2001-06" db="EMBL/GenBank/DDBJ databases">
        <title>A conserved cytosolic leucine-rich protein (LRP) in vertebrate animals.</title>
        <authorList>
            <person name="Huang C.-H."/>
        </authorList>
    </citation>
    <scope>NUCLEOTIDE SEQUENCE [MRNA]</scope>
</reference>
<reference key="2">
    <citation type="submission" date="2006-08" db="EMBL/GenBank/DDBJ databases">
        <authorList>
            <consortium name="NIH - Mammalian Gene Collection (MGC) project"/>
        </authorList>
    </citation>
    <scope>NUCLEOTIDE SEQUENCE [LARGE SCALE MRNA]</scope>
    <source>
        <strain>Hereford</strain>
        <tissue>Fetal cerebellum</tissue>
    </source>
</reference>